<comment type="function">
    <text evidence="1">Catalyzes the reversible isomerization-deamination of glucosamine 6-phosphate (GlcN6P) to form fructose 6-phosphate (Fru6P) and ammonium ion.</text>
</comment>
<comment type="catalytic activity">
    <reaction evidence="1">
        <text>alpha-D-glucosamine 6-phosphate + H2O = beta-D-fructose 6-phosphate + NH4(+)</text>
        <dbReference type="Rhea" id="RHEA:12172"/>
        <dbReference type="ChEBI" id="CHEBI:15377"/>
        <dbReference type="ChEBI" id="CHEBI:28938"/>
        <dbReference type="ChEBI" id="CHEBI:57634"/>
        <dbReference type="ChEBI" id="CHEBI:75989"/>
        <dbReference type="EC" id="3.5.99.6"/>
    </reaction>
</comment>
<comment type="pathway">
    <text evidence="1">Amino-sugar metabolism; N-acetylneuraminate degradation; D-fructose 6-phosphate from N-acetylneuraminate: step 5/5.</text>
</comment>
<comment type="similarity">
    <text evidence="1">Belongs to the glucosamine/galactosamine-6-phosphate isomerase family. NagB subfamily.</text>
</comment>
<dbReference type="EC" id="3.5.99.6" evidence="1"/>
<dbReference type="EMBL" id="BX293980">
    <property type="protein sequence ID" value="CAE77436.1"/>
    <property type="molecule type" value="Genomic_DNA"/>
</dbReference>
<dbReference type="RefSeq" id="NP_975794.1">
    <property type="nucleotide sequence ID" value="NC_005364.2"/>
</dbReference>
<dbReference type="RefSeq" id="WP_011166981.1">
    <property type="nucleotide sequence ID" value="NC_005364.2"/>
</dbReference>
<dbReference type="SMR" id="Q6MSF4"/>
<dbReference type="STRING" id="272632.MSC_0821"/>
<dbReference type="KEGG" id="mmy:MSC_0821"/>
<dbReference type="PATRIC" id="fig|272632.4.peg.883"/>
<dbReference type="eggNOG" id="COG0363">
    <property type="taxonomic scope" value="Bacteria"/>
</dbReference>
<dbReference type="HOGENOM" id="CLU_049611_1_1_14"/>
<dbReference type="UniPathway" id="UPA00629">
    <property type="reaction ID" value="UER00684"/>
</dbReference>
<dbReference type="Proteomes" id="UP000001016">
    <property type="component" value="Chromosome"/>
</dbReference>
<dbReference type="GO" id="GO:0004342">
    <property type="term" value="F:glucosamine-6-phosphate deaminase activity"/>
    <property type="evidence" value="ECO:0007669"/>
    <property type="project" value="UniProtKB-UniRule"/>
</dbReference>
<dbReference type="GO" id="GO:0005975">
    <property type="term" value="P:carbohydrate metabolic process"/>
    <property type="evidence" value="ECO:0007669"/>
    <property type="project" value="InterPro"/>
</dbReference>
<dbReference type="GO" id="GO:0006044">
    <property type="term" value="P:N-acetylglucosamine metabolic process"/>
    <property type="evidence" value="ECO:0007669"/>
    <property type="project" value="InterPro"/>
</dbReference>
<dbReference type="GO" id="GO:0019262">
    <property type="term" value="P:N-acetylneuraminate catabolic process"/>
    <property type="evidence" value="ECO:0007669"/>
    <property type="project" value="UniProtKB-UniRule"/>
</dbReference>
<dbReference type="CDD" id="cd01399">
    <property type="entry name" value="GlcN6P_deaminase"/>
    <property type="match status" value="1"/>
</dbReference>
<dbReference type="FunFam" id="3.40.50.1360:FF:000003">
    <property type="entry name" value="Glucosamine-6-phosphate deaminase"/>
    <property type="match status" value="1"/>
</dbReference>
<dbReference type="Gene3D" id="3.40.50.1360">
    <property type="match status" value="1"/>
</dbReference>
<dbReference type="HAMAP" id="MF_01241">
    <property type="entry name" value="GlcN6P_deamin"/>
    <property type="match status" value="1"/>
</dbReference>
<dbReference type="InterPro" id="IPR006148">
    <property type="entry name" value="Glc/Gal-6P_isomerase"/>
</dbReference>
<dbReference type="InterPro" id="IPR052960">
    <property type="entry name" value="GlcN6P_deaminase-like"/>
</dbReference>
<dbReference type="InterPro" id="IPR004547">
    <property type="entry name" value="Glucosamine6P_isomerase"/>
</dbReference>
<dbReference type="InterPro" id="IPR018321">
    <property type="entry name" value="Glucosamine6P_isomerase_CS"/>
</dbReference>
<dbReference type="InterPro" id="IPR037171">
    <property type="entry name" value="NagB/RpiA_transferase-like"/>
</dbReference>
<dbReference type="NCBIfam" id="TIGR00502">
    <property type="entry name" value="nagB"/>
    <property type="match status" value="1"/>
</dbReference>
<dbReference type="PANTHER" id="PTHR42892">
    <property type="entry name" value="GLUCOSAMINE-6-PHOSPHATE DEAMINASE-LIKE PROTEIN BT_0258-RELATED"/>
    <property type="match status" value="1"/>
</dbReference>
<dbReference type="PANTHER" id="PTHR42892:SF1">
    <property type="entry name" value="GLUCOSAMINE-6-PHOSPHATE ISOMERASE"/>
    <property type="match status" value="1"/>
</dbReference>
<dbReference type="Pfam" id="PF01182">
    <property type="entry name" value="Glucosamine_iso"/>
    <property type="match status" value="1"/>
</dbReference>
<dbReference type="SUPFAM" id="SSF100950">
    <property type="entry name" value="NagB/RpiA/CoA transferase-like"/>
    <property type="match status" value="1"/>
</dbReference>
<dbReference type="PROSITE" id="PS01161">
    <property type="entry name" value="GLC_GALNAC_ISOMERASE"/>
    <property type="match status" value="1"/>
</dbReference>
<reference key="1">
    <citation type="journal article" date="2004" name="Genome Res.">
        <title>The genome sequence of Mycoplasma mycoides subsp. mycoides SC type strain PG1T, the causative agent of contagious bovine pleuropneumonia (CBPP).</title>
        <authorList>
            <person name="Westberg J."/>
            <person name="Persson A."/>
            <person name="Holmberg A."/>
            <person name="Goesmann A."/>
            <person name="Lundeberg J."/>
            <person name="Johansson K.-E."/>
            <person name="Pettersson B."/>
            <person name="Uhlen M."/>
        </authorList>
    </citation>
    <scope>NUCLEOTIDE SEQUENCE [LARGE SCALE GENOMIC DNA]</scope>
    <source>
        <strain>CCUG 32753 / NCTC 10114 / PG1</strain>
    </source>
</reference>
<gene>
    <name evidence="1" type="primary">nagB</name>
    <name type="ordered locus">MSC_0821</name>
</gene>
<protein>
    <recommendedName>
        <fullName evidence="1">Glucosamine-6-phosphate deaminase</fullName>
        <ecNumber evidence="1">3.5.99.6</ecNumber>
    </recommendedName>
    <alternativeName>
        <fullName evidence="1">GlcN6P deaminase</fullName>
        <shortName evidence="1">GNPDA</shortName>
    </alternativeName>
    <alternativeName>
        <fullName evidence="1">Glucosamine-6-phosphate isomerase</fullName>
    </alternativeName>
</protein>
<feature type="chain" id="PRO_1000067003" description="Glucosamine-6-phosphate deaminase">
    <location>
        <begin position="1"/>
        <end position="244"/>
    </location>
</feature>
<feature type="active site" description="Proton acceptor; for enolization step" evidence="1">
    <location>
        <position position="67"/>
    </location>
</feature>
<feature type="active site" description="For ring-opening step" evidence="1">
    <location>
        <position position="133"/>
    </location>
</feature>
<feature type="active site" description="Proton acceptor; for ring-opening step" evidence="1">
    <location>
        <position position="135"/>
    </location>
</feature>
<feature type="active site" description="For ring-opening step" evidence="1">
    <location>
        <position position="140"/>
    </location>
</feature>
<organism>
    <name type="scientific">Mycoplasma mycoides subsp. mycoides SC (strain CCUG 32753 / NCTC 10114 / PG1)</name>
    <dbReference type="NCBI Taxonomy" id="272632"/>
    <lineage>
        <taxon>Bacteria</taxon>
        <taxon>Bacillati</taxon>
        <taxon>Mycoplasmatota</taxon>
        <taxon>Mollicutes</taxon>
        <taxon>Mycoplasmataceae</taxon>
        <taxon>Mycoplasma</taxon>
    </lineage>
</organism>
<keyword id="KW-0119">Carbohydrate metabolism</keyword>
<keyword id="KW-0378">Hydrolase</keyword>
<keyword id="KW-1185">Reference proteome</keyword>
<sequence length="244" mass="27580">MKLIVLENEEQVANKAAQIISEQIKNKPNSVLGLATGSTPINTYKKLIQMYQEKQISFKDVISFNLDEYKDIDKNNKQSYYYFMKEQLFNYIDINKNNCYIPNASFYDNPIAYDELIKKANGIDLQLLGIGINGHIGFNEPDSSFDSLTQIVDLTNSTIKANSRFFDSIDQVPTQAISMGLQSIMNAKKILLLATGINKSEAIYHLIKGQITKKWPCTILQKHNDVTIIIDKNAASKLTNLKAN</sequence>
<proteinExistence type="inferred from homology"/>
<name>NAGB_MYCMS</name>
<evidence type="ECO:0000255" key="1">
    <source>
        <dbReference type="HAMAP-Rule" id="MF_01241"/>
    </source>
</evidence>
<accession>Q6MSF4</accession>